<gene>
    <name evidence="1" type="primary">scpB</name>
    <name type="ordered locus">MGAS10270_Spy0304</name>
</gene>
<sequence>MTYLSQIEALLFVAGEEGLSLRHLASMLSLTPTALQQQLEKLSQKYEKDQHSSLCLIETANTYRLVTKEGFAELLRAYAKTPMNQSLSRASLEVLSIVAYKQPITRIEIDDIRGVNSSGALSKLLAFDLIREAGKKDVVGRPHLYATTDYFLDYMGINHLDELIEVSAVEPADEEIALFRTQD</sequence>
<accession>Q1JIF4</accession>
<proteinExistence type="inferred from homology"/>
<protein>
    <recommendedName>
        <fullName evidence="1">Segregation and condensation protein B</fullName>
    </recommendedName>
</protein>
<dbReference type="EMBL" id="CP000260">
    <property type="protein sequence ID" value="ABF33369.1"/>
    <property type="molecule type" value="Genomic_DNA"/>
</dbReference>
<dbReference type="RefSeq" id="WP_002985894.1">
    <property type="nucleotide sequence ID" value="NZ_CVUH01000002.1"/>
</dbReference>
<dbReference type="SMR" id="Q1JIF4"/>
<dbReference type="GeneID" id="69901359"/>
<dbReference type="KEGG" id="sph:MGAS10270_Spy0304"/>
<dbReference type="HOGENOM" id="CLU_045647_5_3_9"/>
<dbReference type="Proteomes" id="UP000002436">
    <property type="component" value="Chromosome"/>
</dbReference>
<dbReference type="GO" id="GO:0005737">
    <property type="term" value="C:cytoplasm"/>
    <property type="evidence" value="ECO:0007669"/>
    <property type="project" value="UniProtKB-SubCell"/>
</dbReference>
<dbReference type="GO" id="GO:0051301">
    <property type="term" value="P:cell division"/>
    <property type="evidence" value="ECO:0007669"/>
    <property type="project" value="UniProtKB-KW"/>
</dbReference>
<dbReference type="GO" id="GO:0051304">
    <property type="term" value="P:chromosome separation"/>
    <property type="evidence" value="ECO:0007669"/>
    <property type="project" value="InterPro"/>
</dbReference>
<dbReference type="GO" id="GO:0006260">
    <property type="term" value="P:DNA replication"/>
    <property type="evidence" value="ECO:0007669"/>
    <property type="project" value="UniProtKB-UniRule"/>
</dbReference>
<dbReference type="Gene3D" id="1.10.10.10">
    <property type="entry name" value="Winged helix-like DNA-binding domain superfamily/Winged helix DNA-binding domain"/>
    <property type="match status" value="2"/>
</dbReference>
<dbReference type="HAMAP" id="MF_01804">
    <property type="entry name" value="ScpB"/>
    <property type="match status" value="1"/>
</dbReference>
<dbReference type="InterPro" id="IPR005234">
    <property type="entry name" value="ScpB_csome_segregation"/>
</dbReference>
<dbReference type="InterPro" id="IPR036388">
    <property type="entry name" value="WH-like_DNA-bd_sf"/>
</dbReference>
<dbReference type="InterPro" id="IPR036390">
    <property type="entry name" value="WH_DNA-bd_sf"/>
</dbReference>
<dbReference type="NCBIfam" id="TIGR00281">
    <property type="entry name" value="SMC-Scp complex subunit ScpB"/>
    <property type="match status" value="1"/>
</dbReference>
<dbReference type="PANTHER" id="PTHR34298">
    <property type="entry name" value="SEGREGATION AND CONDENSATION PROTEIN B"/>
    <property type="match status" value="1"/>
</dbReference>
<dbReference type="PANTHER" id="PTHR34298:SF2">
    <property type="entry name" value="SEGREGATION AND CONDENSATION PROTEIN B"/>
    <property type="match status" value="1"/>
</dbReference>
<dbReference type="Pfam" id="PF04079">
    <property type="entry name" value="SMC_ScpB"/>
    <property type="match status" value="1"/>
</dbReference>
<dbReference type="PIRSF" id="PIRSF019345">
    <property type="entry name" value="ScpB"/>
    <property type="match status" value="1"/>
</dbReference>
<dbReference type="SUPFAM" id="SSF46785">
    <property type="entry name" value="Winged helix' DNA-binding domain"/>
    <property type="match status" value="2"/>
</dbReference>
<reference key="1">
    <citation type="journal article" date="2006" name="Proc. Natl. Acad. Sci. U.S.A.">
        <title>Molecular genetic anatomy of inter- and intraserotype variation in the human bacterial pathogen group A Streptococcus.</title>
        <authorList>
            <person name="Beres S.B."/>
            <person name="Richter E.W."/>
            <person name="Nagiec M.J."/>
            <person name="Sumby P."/>
            <person name="Porcella S.F."/>
            <person name="DeLeo F.R."/>
            <person name="Musser J.M."/>
        </authorList>
    </citation>
    <scope>NUCLEOTIDE SEQUENCE [LARGE SCALE GENOMIC DNA]</scope>
    <source>
        <strain>MGAS10270</strain>
    </source>
</reference>
<evidence type="ECO:0000255" key="1">
    <source>
        <dbReference type="HAMAP-Rule" id="MF_01804"/>
    </source>
</evidence>
<organism>
    <name type="scientific">Streptococcus pyogenes serotype M2 (strain MGAS10270)</name>
    <dbReference type="NCBI Taxonomy" id="370552"/>
    <lineage>
        <taxon>Bacteria</taxon>
        <taxon>Bacillati</taxon>
        <taxon>Bacillota</taxon>
        <taxon>Bacilli</taxon>
        <taxon>Lactobacillales</taxon>
        <taxon>Streptococcaceae</taxon>
        <taxon>Streptococcus</taxon>
    </lineage>
</organism>
<name>SCPB_STRPD</name>
<keyword id="KW-0131">Cell cycle</keyword>
<keyword id="KW-0132">Cell division</keyword>
<keyword id="KW-0159">Chromosome partition</keyword>
<keyword id="KW-0963">Cytoplasm</keyword>
<comment type="function">
    <text evidence="1">Participates in chromosomal partition during cell division. May act via the formation of a condensin-like complex containing Smc and ScpA that pull DNA away from mid-cell into both cell halves.</text>
</comment>
<comment type="subunit">
    <text evidence="1">Homodimer. Homodimerization may be required to stabilize the binding of ScpA to the Smc head domains. Component of a cohesin-like complex composed of ScpA, ScpB and the Smc homodimer, in which ScpA and ScpB bind to the head domain of Smc. The presence of the three proteins is required for the association of the complex with DNA.</text>
</comment>
<comment type="subcellular location">
    <subcellularLocation>
        <location evidence="1">Cytoplasm</location>
    </subcellularLocation>
    <text evidence="1">Associated with two foci at the outer edges of the nucleoid region in young cells, and at four foci within both cell halves in older cells.</text>
</comment>
<comment type="similarity">
    <text evidence="1">Belongs to the ScpB family.</text>
</comment>
<feature type="chain" id="PRO_0000273311" description="Segregation and condensation protein B">
    <location>
        <begin position="1"/>
        <end position="183"/>
    </location>
</feature>